<gene>
    <name type="primary">yceF1</name>
    <name type="ordered locus">ECP_1079</name>
</gene>
<organism>
    <name type="scientific">Escherichia coli O6:K15:H31 (strain 536 / UPEC)</name>
    <dbReference type="NCBI Taxonomy" id="362663"/>
    <lineage>
        <taxon>Bacteria</taxon>
        <taxon>Pseudomonadati</taxon>
        <taxon>Pseudomonadota</taxon>
        <taxon>Gammaproteobacteria</taxon>
        <taxon>Enterobacterales</taxon>
        <taxon>Enterobacteriaceae</taxon>
        <taxon>Escherichia</taxon>
    </lineage>
</organism>
<accession>Q0TIY7</accession>
<keyword id="KW-0963">Cytoplasm</keyword>
<keyword id="KW-0378">Hydrolase</keyword>
<keyword id="KW-0546">Nucleotide metabolism</keyword>
<reference key="1">
    <citation type="journal article" date="2006" name="Mol. Microbiol.">
        <title>Role of pathogenicity island-associated integrases in the genome plasticity of uropathogenic Escherichia coli strain 536.</title>
        <authorList>
            <person name="Hochhut B."/>
            <person name="Wilde C."/>
            <person name="Balling G."/>
            <person name="Middendorf B."/>
            <person name="Dobrindt U."/>
            <person name="Brzuszkiewicz E."/>
            <person name="Gottschalk G."/>
            <person name="Carniel E."/>
            <person name="Hacker J."/>
        </authorList>
    </citation>
    <scope>NUCLEOTIDE SEQUENCE [LARGE SCALE GENOMIC DNA]</scope>
    <source>
        <strain>536 / UPEC</strain>
    </source>
</reference>
<proteinExistence type="inferred from homology"/>
<evidence type="ECO:0000255" key="1">
    <source>
        <dbReference type="HAMAP-Rule" id="MF_00528"/>
    </source>
</evidence>
<evidence type="ECO:0000305" key="2"/>
<feature type="chain" id="PRO_0000267310" description="7-methyl-GTP pyrophosphatase">
    <location>
        <begin position="1"/>
        <end position="194"/>
    </location>
</feature>
<feature type="active site" description="Proton acceptor" evidence="1">
    <location>
        <position position="69"/>
    </location>
</feature>
<feature type="site" description="Important for substrate specificity" evidence="1">
    <location>
        <position position="12"/>
    </location>
</feature>
<feature type="site" description="Important for substrate specificity" evidence="1">
    <location>
        <position position="70"/>
    </location>
</feature>
<feature type="site" description="Important for substrate specificity" evidence="1">
    <location>
        <position position="154"/>
    </location>
</feature>
<dbReference type="EC" id="3.6.1.-" evidence="1"/>
<dbReference type="EMBL" id="CP000247">
    <property type="protein sequence ID" value="ABG69092.1"/>
    <property type="status" value="ALT_INIT"/>
    <property type="molecule type" value="Genomic_DNA"/>
</dbReference>
<dbReference type="SMR" id="Q0TIY7"/>
<dbReference type="KEGG" id="ecp:ECP_1079"/>
<dbReference type="HOGENOM" id="CLU_040416_1_0_6"/>
<dbReference type="Proteomes" id="UP000009182">
    <property type="component" value="Chromosome"/>
</dbReference>
<dbReference type="GO" id="GO:0005737">
    <property type="term" value="C:cytoplasm"/>
    <property type="evidence" value="ECO:0007669"/>
    <property type="project" value="UniProtKB-SubCell"/>
</dbReference>
<dbReference type="GO" id="GO:0047429">
    <property type="term" value="F:nucleoside triphosphate diphosphatase activity"/>
    <property type="evidence" value="ECO:0007669"/>
    <property type="project" value="InterPro"/>
</dbReference>
<dbReference type="GO" id="GO:0009117">
    <property type="term" value="P:nucleotide metabolic process"/>
    <property type="evidence" value="ECO:0007669"/>
    <property type="project" value="UniProtKB-KW"/>
</dbReference>
<dbReference type="CDD" id="cd00555">
    <property type="entry name" value="Maf"/>
    <property type="match status" value="1"/>
</dbReference>
<dbReference type="FunFam" id="3.90.950.10:FF:000005">
    <property type="entry name" value="7-methyl-GTP pyrophosphatase"/>
    <property type="match status" value="1"/>
</dbReference>
<dbReference type="Gene3D" id="3.90.950.10">
    <property type="match status" value="1"/>
</dbReference>
<dbReference type="HAMAP" id="MF_00528">
    <property type="entry name" value="Maf"/>
    <property type="match status" value="1"/>
</dbReference>
<dbReference type="InterPro" id="IPR029001">
    <property type="entry name" value="ITPase-like_fam"/>
</dbReference>
<dbReference type="InterPro" id="IPR003697">
    <property type="entry name" value="Maf-like"/>
</dbReference>
<dbReference type="NCBIfam" id="TIGR00172">
    <property type="entry name" value="maf"/>
    <property type="match status" value="1"/>
</dbReference>
<dbReference type="PANTHER" id="PTHR43213:SF10">
    <property type="entry name" value="7-METHYL-GTP PYROPHOSPHATASE"/>
    <property type="match status" value="1"/>
</dbReference>
<dbReference type="PANTHER" id="PTHR43213">
    <property type="entry name" value="BIFUNCTIONAL DTTP/UTP PYROPHOSPHATASE/METHYLTRANSFERASE PROTEIN-RELATED"/>
    <property type="match status" value="1"/>
</dbReference>
<dbReference type="Pfam" id="PF02545">
    <property type="entry name" value="Maf"/>
    <property type="match status" value="1"/>
</dbReference>
<dbReference type="PIRSF" id="PIRSF006305">
    <property type="entry name" value="Maf"/>
    <property type="match status" value="1"/>
</dbReference>
<dbReference type="SUPFAM" id="SSF52972">
    <property type="entry name" value="ITPase-like"/>
    <property type="match status" value="1"/>
</dbReference>
<comment type="function">
    <text evidence="1">Nucleoside triphosphate pyrophosphatase that hydrolyzes 7-methyl-GTP (m(7)GTP). May have a dual role in cell division arrest and in preventing the incorporation of modified nucleotides into cellular nucleic acids.</text>
</comment>
<comment type="catalytic activity">
    <reaction evidence="1">
        <text>N(7)-methyl-GTP + H2O = N(7)-methyl-GMP + diphosphate + H(+)</text>
        <dbReference type="Rhea" id="RHEA:58744"/>
        <dbReference type="ChEBI" id="CHEBI:15377"/>
        <dbReference type="ChEBI" id="CHEBI:15378"/>
        <dbReference type="ChEBI" id="CHEBI:33019"/>
        <dbReference type="ChEBI" id="CHEBI:58285"/>
        <dbReference type="ChEBI" id="CHEBI:87133"/>
    </reaction>
</comment>
<comment type="cofactor">
    <cofactor evidence="1">
        <name>a divalent metal cation</name>
        <dbReference type="ChEBI" id="CHEBI:60240"/>
    </cofactor>
</comment>
<comment type="subcellular location">
    <subcellularLocation>
        <location evidence="1">Cytoplasm</location>
    </subcellularLocation>
</comment>
<comment type="similarity">
    <text evidence="1">Belongs to the Maf family. YceF subfamily.</text>
</comment>
<comment type="sequence caution" evidence="2">
    <conflict type="erroneous initiation">
        <sequence resource="EMBL-CDS" id="ABG69092"/>
    </conflict>
</comment>
<name>NTPPB_ECOL5</name>
<protein>
    <recommendedName>
        <fullName evidence="1">7-methyl-GTP pyrophosphatase</fullName>
        <shortName evidence="1">m(7)GTP pyrophosphatase</shortName>
        <ecNumber evidence="1">3.6.1.-</ecNumber>
    </recommendedName>
</protein>
<sequence length="194" mass="21691">MPKLILASTSPWRRALLEKLQISFECAAPEVDETPRSDESPRQLVLRLAQEKAQSLASRYPDHLIIGSDQVCVLDGEITGKPLTEENARLQLRKASGNIVTFYTGLALFNSANGHLQTEVEPFDVHFRHLSEAEIDNYVRKEHPLHCAGSFKSEGFGITLFERLEGRDPNTLVGLPLIALCQMLRREGKNPLMG</sequence>